<organism>
    <name type="scientific">Varicella-zoster virus (strain Dumas)</name>
    <name type="common">HHV-3</name>
    <name type="synonym">Human herpesvirus 3</name>
    <dbReference type="NCBI Taxonomy" id="10338"/>
    <lineage>
        <taxon>Viruses</taxon>
        <taxon>Duplodnaviria</taxon>
        <taxon>Heunggongvirae</taxon>
        <taxon>Peploviricota</taxon>
        <taxon>Herviviricetes</taxon>
        <taxon>Herpesvirales</taxon>
        <taxon>Orthoherpesviridae</taxon>
        <taxon>Alphaherpesvirinae</taxon>
        <taxon>Varicellovirus</taxon>
        <taxon>Varicellovirus humanalpha3</taxon>
        <taxon>Human herpesvirus 3</taxon>
    </lineage>
</organism>
<name>ICP27_VZVD</name>
<dbReference type="EMBL" id="X04370">
    <property type="protein sequence ID" value="CAA27887.1"/>
    <property type="molecule type" value="Genomic_DNA"/>
</dbReference>
<dbReference type="PIR" id="D27212">
    <property type="entry name" value="WZBE4"/>
</dbReference>
<dbReference type="SMR" id="P09269"/>
<dbReference type="Proteomes" id="UP000002602">
    <property type="component" value="Genome"/>
</dbReference>
<dbReference type="GO" id="GO:0030430">
    <property type="term" value="C:host cell cytoplasm"/>
    <property type="evidence" value="ECO:0007669"/>
    <property type="project" value="UniProtKB-SubCell"/>
</dbReference>
<dbReference type="GO" id="GO:0042025">
    <property type="term" value="C:host cell nucleus"/>
    <property type="evidence" value="ECO:0007669"/>
    <property type="project" value="UniProtKB-SubCell"/>
</dbReference>
<dbReference type="GO" id="GO:0003723">
    <property type="term" value="F:RNA binding"/>
    <property type="evidence" value="ECO:0007669"/>
    <property type="project" value="UniProtKB-KW"/>
</dbReference>
<dbReference type="GO" id="GO:0008270">
    <property type="term" value="F:zinc ion binding"/>
    <property type="evidence" value="ECO:0007669"/>
    <property type="project" value="UniProtKB-KW"/>
</dbReference>
<dbReference type="GO" id="GO:0006355">
    <property type="term" value="P:regulation of DNA-templated transcription"/>
    <property type="evidence" value="ECO:0007669"/>
    <property type="project" value="InterPro"/>
</dbReference>
<dbReference type="InterPro" id="IPR008648">
    <property type="entry name" value="ICP27-like"/>
</dbReference>
<dbReference type="Pfam" id="PF05459">
    <property type="entry name" value="Herpes_UL69"/>
    <property type="match status" value="1"/>
</dbReference>
<proteinExistence type="evidence at protein level"/>
<sequence>MASASIPTDPDVSTICEDFMNLLPDEPSDDFALEVTDWANDEAIGSTPGEDSTTSRTVYVERTADTAYNPRYSKRRHGRRESYHHNRPKTLVVVLPDSNHHGGRDVETGYARIERGHRRSSRSYNTQSSRKHRDRSLSNRRRRPTTPPAMTTGERNDQTHDESYRLRFSKRDARRERIRKEYDIPVDRITGRAIEVVSTAGASVTIDSVRHLDETIEKLVVRYATIQEGDSWASGGCFPGIKQNTSWPELMLYGHELYRTFESYKMDSRIARALRERVIRGESLIEALESADELLTWIKMLAAKNLPIYTNNPIVATSKSLLENLKLKLGPFVRCLLLNRDNDLGSRTLPELLRQQRFSDITCITTYMFVMIARIANIVVRGSKFVEYDDISCNVQVLQEYTPGSCLAGVLEALITHQRECGRVECTLSTWAGHLSDARPYGKYFKCSTFNC</sequence>
<feature type="chain" id="PRO_0000115831" description="mRNA export factor ICP27 homolog">
    <location>
        <begin position="1"/>
        <end position="452"/>
    </location>
</feature>
<feature type="zinc finger region" description="CHC2-type" evidence="2">
    <location>
        <begin position="335"/>
        <end position="426"/>
    </location>
</feature>
<feature type="region of interest" description="Disordered" evidence="3">
    <location>
        <begin position="42"/>
        <end position="164"/>
    </location>
</feature>
<feature type="compositionally biased region" description="Basic and acidic residues" evidence="3">
    <location>
        <begin position="98"/>
        <end position="107"/>
    </location>
</feature>
<feature type="compositionally biased region" description="Basic residues" evidence="3">
    <location>
        <begin position="129"/>
        <end position="144"/>
    </location>
</feature>
<feature type="compositionally biased region" description="Basic and acidic residues" evidence="3">
    <location>
        <begin position="154"/>
        <end position="164"/>
    </location>
</feature>
<feature type="binding site" evidence="2">
    <location>
        <position position="335"/>
    </location>
    <ligand>
        <name>Zn(2+)</name>
        <dbReference type="ChEBI" id="CHEBI:29105"/>
    </ligand>
</feature>
<feature type="binding site" evidence="2">
    <location>
        <position position="417"/>
    </location>
    <ligand>
        <name>Zn(2+)</name>
        <dbReference type="ChEBI" id="CHEBI:29105"/>
    </ligand>
</feature>
<feature type="binding site" evidence="2">
    <location>
        <position position="421"/>
    </location>
    <ligand>
        <name>Zn(2+)</name>
        <dbReference type="ChEBI" id="CHEBI:29105"/>
    </ligand>
</feature>
<feature type="binding site" evidence="2">
    <location>
        <position position="426"/>
    </location>
    <ligand>
        <name>Zn(2+)</name>
        <dbReference type="ChEBI" id="CHEBI:29105"/>
    </ligand>
</feature>
<comment type="function">
    <text evidence="1 6 7">Multifunctional regulator of the expression of viral genes that mediates nuclear export of viral intronless mRNAs. This immediate early (EI) protein promotes the nuclear export of viral intronless mRNAs by interacting with mRNAs and host NXF1/TAP (By similarity).</text>
</comment>
<comment type="subunit">
    <text evidence="4 5 6">Homodimer. Homodimerization is required for transactivation. Associates in a complex with RNA, and host export factors NXF1/TAP and ALYREF; these interactions allow nuclear export of viral transcripts. Interacts with three host shuttling SR proteins SRSF1, SRSF3 and SRSF7. Interacts with host SRPK1. Interacts with IE62; this interaction enhances IE62 transactivation.</text>
</comment>
<comment type="subcellular location">
    <subcellularLocation>
        <location evidence="1">Host cytoplasm</location>
    </subcellularLocation>
    <subcellularLocation>
        <location evidence="1">Host nucleus</location>
    </subcellularLocation>
    <text evidence="8">Shuttles between the nucleus and the cytoplasm (Probable). IE4 utilizes, at least, XPO1/CRM1 as a cofactor for nuclear export.</text>
</comment>
<comment type="domain">
    <text>Binds viral intronless RNAs and SR proteins through the Arg-rich region.</text>
</comment>
<comment type="PTM">
    <text>Phosphorylated in vitro by SRPK1.</text>
</comment>
<comment type="similarity">
    <text evidence="8">Belongs to the HHV-1 ICP27 protein family.</text>
</comment>
<accession>P09269</accession>
<organismHost>
    <name type="scientific">Homo sapiens</name>
    <name type="common">Human</name>
    <dbReference type="NCBI Taxonomy" id="9606"/>
</organismHost>
<reference key="1">
    <citation type="journal article" date="1986" name="J. Gen. Virol.">
        <title>The complete DNA sequence of varicella-zoster virus.</title>
        <authorList>
            <person name="Davison A.J."/>
            <person name="Scott J.E."/>
        </authorList>
    </citation>
    <scope>NUCLEOTIDE SEQUENCE [LARGE SCALE GENOMIC DNA]</scope>
</reference>
<reference key="2">
    <citation type="journal article" date="1997" name="J. Virol.">
        <title>Varicella-zoster virus open reading frame 4 encodes an immediate-early protein with posttranscriptional regulatory properties.</title>
        <authorList>
            <person name="Defechereux P."/>
            <person name="Debrus S."/>
            <person name="Baudoux L."/>
            <person name="Rentier B."/>
            <person name="Piette J."/>
        </authorList>
    </citation>
    <scope>FUNCTION</scope>
</reference>
<reference key="3">
    <citation type="journal article" date="2000" name="Virology">
        <title>Physical interaction between two varicella zoster virus gene regulatory proteins, IE4 and IE62.</title>
        <authorList>
            <person name="Spengler M.L."/>
            <person name="Ruyechan W.T."/>
            <person name="Hay J."/>
        </authorList>
    </citation>
    <scope>INTERACTION WITH IE62</scope>
</reference>
<reference key="4">
    <citation type="journal article" date="2000" name="J. Biol. Chem.">
        <title>Gene activation by Varicella-zoster virus IE4 protein requires its dimerization and involves both the arginine-rich sequence, the central part, and the carboxyl-terminal cysteine-rich region.</title>
        <authorList>
            <person name="Baudoux L."/>
            <person name="Defechereux P."/>
            <person name="Rentier B."/>
            <person name="Piette J."/>
        </authorList>
    </citation>
    <scope>SUBUNIT</scope>
</reference>
<reference key="5">
    <citation type="journal article" date="2009" name="PLoS ONE">
        <title>Varicella-zoster virus IE4 protein interacts with SR proteins and exports mRNAs through the TAP/NXF1 pathway.</title>
        <authorList>
            <person name="Ote I."/>
            <person name="Lebrun M."/>
            <person name="Vandevenne P."/>
            <person name="Bontems S."/>
            <person name="Medina-Palazon C."/>
            <person name="Manet E."/>
            <person name="Piette J."/>
            <person name="Sadzot-Delvaux C."/>
        </authorList>
    </citation>
    <scope>FUNCTION</scope>
    <scope>INTERACTION WITH HUMAN SRSF1; SRSF3; SRSF7 AND SRPK1</scope>
    <source>
        <strain>NIK</strain>
    </source>
</reference>
<keyword id="KW-0010">Activator</keyword>
<keyword id="KW-0244">Early protein</keyword>
<keyword id="KW-1035">Host cytoplasm</keyword>
<keyword id="KW-1048">Host nucleus</keyword>
<keyword id="KW-0945">Host-virus interaction</keyword>
<keyword id="KW-0479">Metal-binding</keyword>
<keyword id="KW-1185">Reference proteome</keyword>
<keyword id="KW-0694">RNA-binding</keyword>
<keyword id="KW-0804">Transcription</keyword>
<keyword id="KW-0805">Transcription regulation</keyword>
<keyword id="KW-0862">Zinc</keyword>
<keyword id="KW-0863">Zinc-finger</keyword>
<protein>
    <recommendedName>
        <fullName>mRNA export factor ICP27 homolog</fullName>
    </recommendedName>
    <alternativeName>
        <fullName>Immediate-early protein 4</fullName>
        <shortName>IE4</shortName>
    </alternativeName>
    <alternativeName>
        <fullName>Transcriptional transactivator IE4</fullName>
    </alternativeName>
</protein>
<evidence type="ECO:0000250" key="1"/>
<evidence type="ECO:0000250" key="2">
    <source>
        <dbReference type="UniProtKB" id="P10238"/>
    </source>
</evidence>
<evidence type="ECO:0000256" key="3">
    <source>
        <dbReference type="SAM" id="MobiDB-lite"/>
    </source>
</evidence>
<evidence type="ECO:0000269" key="4">
    <source>
    </source>
</evidence>
<evidence type="ECO:0000269" key="5">
    <source>
    </source>
</evidence>
<evidence type="ECO:0000269" key="6">
    <source>
    </source>
</evidence>
<evidence type="ECO:0000269" key="7">
    <source>
    </source>
</evidence>
<evidence type="ECO:0000305" key="8"/>
<gene>
    <name type="ORF">ORF4</name>
</gene>